<proteinExistence type="inferred from homology"/>
<feature type="chain" id="PRO_0000386704" description="Ribosomal RNA small subunit methyltransferase H">
    <location>
        <begin position="1"/>
        <end position="316"/>
    </location>
</feature>
<feature type="binding site" evidence="1">
    <location>
        <begin position="35"/>
        <end position="37"/>
    </location>
    <ligand>
        <name>S-adenosyl-L-methionine</name>
        <dbReference type="ChEBI" id="CHEBI:59789"/>
    </ligand>
</feature>
<feature type="binding site" evidence="1">
    <location>
        <position position="55"/>
    </location>
    <ligand>
        <name>S-adenosyl-L-methionine</name>
        <dbReference type="ChEBI" id="CHEBI:59789"/>
    </ligand>
</feature>
<feature type="binding site" evidence="1">
    <location>
        <position position="79"/>
    </location>
    <ligand>
        <name>S-adenosyl-L-methionine</name>
        <dbReference type="ChEBI" id="CHEBI:59789"/>
    </ligand>
</feature>
<feature type="binding site" evidence="1">
    <location>
        <position position="101"/>
    </location>
    <ligand>
        <name>S-adenosyl-L-methionine</name>
        <dbReference type="ChEBI" id="CHEBI:59789"/>
    </ligand>
</feature>
<feature type="binding site" evidence="1">
    <location>
        <position position="108"/>
    </location>
    <ligand>
        <name>S-adenosyl-L-methionine</name>
        <dbReference type="ChEBI" id="CHEBI:59789"/>
    </ligand>
</feature>
<evidence type="ECO:0000255" key="1">
    <source>
        <dbReference type="HAMAP-Rule" id="MF_01007"/>
    </source>
</evidence>
<name>RSMH_ALISL</name>
<dbReference type="EC" id="2.1.1.199" evidence="1"/>
<dbReference type="EMBL" id="FM178379">
    <property type="protein sequence ID" value="CAQ80336.1"/>
    <property type="molecule type" value="Genomic_DNA"/>
</dbReference>
<dbReference type="RefSeq" id="WP_012551107.1">
    <property type="nucleotide sequence ID" value="NC_011312.1"/>
</dbReference>
<dbReference type="SMR" id="B6ELI3"/>
<dbReference type="KEGG" id="vsa:VSAL_I2652"/>
<dbReference type="eggNOG" id="COG0275">
    <property type="taxonomic scope" value="Bacteria"/>
</dbReference>
<dbReference type="HOGENOM" id="CLU_038422_2_0_6"/>
<dbReference type="Proteomes" id="UP000001730">
    <property type="component" value="Chromosome 1"/>
</dbReference>
<dbReference type="GO" id="GO:0005737">
    <property type="term" value="C:cytoplasm"/>
    <property type="evidence" value="ECO:0007669"/>
    <property type="project" value="UniProtKB-SubCell"/>
</dbReference>
<dbReference type="GO" id="GO:0071424">
    <property type="term" value="F:rRNA (cytosine-N4-)-methyltransferase activity"/>
    <property type="evidence" value="ECO:0007669"/>
    <property type="project" value="UniProtKB-UniRule"/>
</dbReference>
<dbReference type="GO" id="GO:0070475">
    <property type="term" value="P:rRNA base methylation"/>
    <property type="evidence" value="ECO:0007669"/>
    <property type="project" value="UniProtKB-UniRule"/>
</dbReference>
<dbReference type="FunFam" id="1.10.150.170:FF:000001">
    <property type="entry name" value="Ribosomal RNA small subunit methyltransferase H"/>
    <property type="match status" value="1"/>
</dbReference>
<dbReference type="Gene3D" id="1.10.150.170">
    <property type="entry name" value="Putative methyltransferase TM0872, insert domain"/>
    <property type="match status" value="1"/>
</dbReference>
<dbReference type="Gene3D" id="3.40.50.150">
    <property type="entry name" value="Vaccinia Virus protein VP39"/>
    <property type="match status" value="1"/>
</dbReference>
<dbReference type="HAMAP" id="MF_01007">
    <property type="entry name" value="16SrRNA_methyltr_H"/>
    <property type="match status" value="1"/>
</dbReference>
<dbReference type="InterPro" id="IPR002903">
    <property type="entry name" value="RsmH"/>
</dbReference>
<dbReference type="InterPro" id="IPR023397">
    <property type="entry name" value="SAM-dep_MeTrfase_MraW_recog"/>
</dbReference>
<dbReference type="InterPro" id="IPR029063">
    <property type="entry name" value="SAM-dependent_MTases_sf"/>
</dbReference>
<dbReference type="NCBIfam" id="TIGR00006">
    <property type="entry name" value="16S rRNA (cytosine(1402)-N(4))-methyltransferase RsmH"/>
    <property type="match status" value="1"/>
</dbReference>
<dbReference type="PANTHER" id="PTHR11265:SF0">
    <property type="entry name" value="12S RRNA N4-METHYLCYTIDINE METHYLTRANSFERASE"/>
    <property type="match status" value="1"/>
</dbReference>
<dbReference type="PANTHER" id="PTHR11265">
    <property type="entry name" value="S-ADENOSYL-METHYLTRANSFERASE MRAW"/>
    <property type="match status" value="1"/>
</dbReference>
<dbReference type="Pfam" id="PF01795">
    <property type="entry name" value="Methyltransf_5"/>
    <property type="match status" value="1"/>
</dbReference>
<dbReference type="PIRSF" id="PIRSF004486">
    <property type="entry name" value="MraW"/>
    <property type="match status" value="1"/>
</dbReference>
<dbReference type="SUPFAM" id="SSF81799">
    <property type="entry name" value="Putative methyltransferase TM0872, insert domain"/>
    <property type="match status" value="1"/>
</dbReference>
<dbReference type="SUPFAM" id="SSF53335">
    <property type="entry name" value="S-adenosyl-L-methionine-dependent methyltransferases"/>
    <property type="match status" value="1"/>
</dbReference>
<sequence>MSEQFQHVSVLLHESIDGLAIKPDGIYIDGTFGRGGHSRQILSRLGENGRLYSIDRDPQAIAEAKTITDPRFNIIHGPFSGLKGYVEELGLVGQIDGVLLDLGVSSPQLDDADRGFSFMKDGPLDMRMDPTSGMPVSQWLLTADVEDITWVIREFGEDKHAWRIAKGIVAYRDNEENEPLTRTGQLAKLISDVAPKNFKEKKHPATRTFQAFRIYINSELDEIDTALNGALDVFAEGGRLSVISFHSLEDRMVKHFIRKESRGPQVPHGIPLTENQIKALGSAKMKPIGKAIKPTVNEVDVNVRSRSSVLRIAERL</sequence>
<gene>
    <name evidence="1" type="primary">rsmH</name>
    <name type="synonym">mraW</name>
    <name type="ordered locus">VSAL_I2652</name>
</gene>
<protein>
    <recommendedName>
        <fullName evidence="1">Ribosomal RNA small subunit methyltransferase H</fullName>
        <ecNumber evidence="1">2.1.1.199</ecNumber>
    </recommendedName>
    <alternativeName>
        <fullName evidence="1">16S rRNA m(4)C1402 methyltransferase</fullName>
    </alternativeName>
    <alternativeName>
        <fullName evidence="1">rRNA (cytosine-N(4)-)-methyltransferase RsmH</fullName>
    </alternativeName>
</protein>
<keyword id="KW-0963">Cytoplasm</keyword>
<keyword id="KW-0489">Methyltransferase</keyword>
<keyword id="KW-0698">rRNA processing</keyword>
<keyword id="KW-0949">S-adenosyl-L-methionine</keyword>
<keyword id="KW-0808">Transferase</keyword>
<accession>B6ELI3</accession>
<comment type="function">
    <text evidence="1">Specifically methylates the N4 position of cytidine in position 1402 (C1402) of 16S rRNA.</text>
</comment>
<comment type="catalytic activity">
    <reaction evidence="1">
        <text>cytidine(1402) in 16S rRNA + S-adenosyl-L-methionine = N(4)-methylcytidine(1402) in 16S rRNA + S-adenosyl-L-homocysteine + H(+)</text>
        <dbReference type="Rhea" id="RHEA:42928"/>
        <dbReference type="Rhea" id="RHEA-COMP:10286"/>
        <dbReference type="Rhea" id="RHEA-COMP:10287"/>
        <dbReference type="ChEBI" id="CHEBI:15378"/>
        <dbReference type="ChEBI" id="CHEBI:57856"/>
        <dbReference type="ChEBI" id="CHEBI:59789"/>
        <dbReference type="ChEBI" id="CHEBI:74506"/>
        <dbReference type="ChEBI" id="CHEBI:82748"/>
        <dbReference type="EC" id="2.1.1.199"/>
    </reaction>
</comment>
<comment type="subcellular location">
    <subcellularLocation>
        <location evidence="1">Cytoplasm</location>
    </subcellularLocation>
</comment>
<comment type="similarity">
    <text evidence="1">Belongs to the methyltransferase superfamily. RsmH family.</text>
</comment>
<reference key="1">
    <citation type="journal article" date="2008" name="BMC Genomics">
        <title>The genome sequence of the fish pathogen Aliivibrio salmonicida strain LFI1238 shows extensive evidence of gene decay.</title>
        <authorList>
            <person name="Hjerde E."/>
            <person name="Lorentzen M.S."/>
            <person name="Holden M.T."/>
            <person name="Seeger K."/>
            <person name="Paulsen S."/>
            <person name="Bason N."/>
            <person name="Churcher C."/>
            <person name="Harris D."/>
            <person name="Norbertczak H."/>
            <person name="Quail M.A."/>
            <person name="Sanders S."/>
            <person name="Thurston S."/>
            <person name="Parkhill J."/>
            <person name="Willassen N.P."/>
            <person name="Thomson N.R."/>
        </authorList>
    </citation>
    <scope>NUCLEOTIDE SEQUENCE [LARGE SCALE GENOMIC DNA]</scope>
    <source>
        <strain>LFI1238</strain>
    </source>
</reference>
<organism>
    <name type="scientific">Aliivibrio salmonicida (strain LFI1238)</name>
    <name type="common">Vibrio salmonicida (strain LFI1238)</name>
    <dbReference type="NCBI Taxonomy" id="316275"/>
    <lineage>
        <taxon>Bacteria</taxon>
        <taxon>Pseudomonadati</taxon>
        <taxon>Pseudomonadota</taxon>
        <taxon>Gammaproteobacteria</taxon>
        <taxon>Vibrionales</taxon>
        <taxon>Vibrionaceae</taxon>
        <taxon>Aliivibrio</taxon>
    </lineage>
</organism>